<gene>
    <name type="primary">ADRB3</name>
    <name type="synonym">B3AR</name>
</gene>
<evidence type="ECO:0000250" key="1"/>
<evidence type="ECO:0000250" key="2">
    <source>
        <dbReference type="UniProtKB" id="P13945"/>
    </source>
</evidence>
<evidence type="ECO:0000255" key="3"/>
<evidence type="ECO:0000255" key="4">
    <source>
        <dbReference type="PROSITE-ProRule" id="PRU00521"/>
    </source>
</evidence>
<evidence type="ECO:0000256" key="5">
    <source>
        <dbReference type="SAM" id="MobiDB-lite"/>
    </source>
</evidence>
<evidence type="ECO:0000305" key="6"/>
<evidence type="ECO:0007829" key="7">
    <source>
        <dbReference type="PDB" id="7DH5"/>
    </source>
</evidence>
<evidence type="ECO:0007829" key="8">
    <source>
        <dbReference type="PDB" id="7XJH"/>
    </source>
</evidence>
<organism>
    <name type="scientific">Canis lupus familiaris</name>
    <name type="common">Dog</name>
    <name type="synonym">Canis familiaris</name>
    <dbReference type="NCBI Taxonomy" id="9615"/>
    <lineage>
        <taxon>Eukaryota</taxon>
        <taxon>Metazoa</taxon>
        <taxon>Chordata</taxon>
        <taxon>Craniata</taxon>
        <taxon>Vertebrata</taxon>
        <taxon>Euteleostomi</taxon>
        <taxon>Mammalia</taxon>
        <taxon>Eutheria</taxon>
        <taxon>Laurasiatheria</taxon>
        <taxon>Carnivora</taxon>
        <taxon>Caniformia</taxon>
        <taxon>Canidae</taxon>
        <taxon>Canis</taxon>
    </lineage>
</organism>
<protein>
    <recommendedName>
        <fullName>Beta-3 adrenergic receptor</fullName>
    </recommendedName>
    <alternativeName>
        <fullName>Beta-3 adrenoreceptor</fullName>
        <shortName>Beta-3 adrenoceptor</shortName>
    </alternativeName>
</protein>
<feature type="chain" id="PRO_0000069139" description="Beta-3 adrenergic receptor">
    <location>
        <begin position="1"/>
        <end position="405"/>
    </location>
</feature>
<feature type="topological domain" description="Extracellular" evidence="1">
    <location>
        <begin position="1"/>
        <end position="36"/>
    </location>
</feature>
<feature type="transmembrane region" description="Helical; Name=1" evidence="1">
    <location>
        <begin position="37"/>
        <end position="63"/>
    </location>
</feature>
<feature type="topological domain" description="Cytoplasmic" evidence="1">
    <location>
        <begin position="64"/>
        <end position="72"/>
    </location>
</feature>
<feature type="transmembrane region" description="Helical; Name=2" evidence="1">
    <location>
        <begin position="73"/>
        <end position="91"/>
    </location>
</feature>
<feature type="topological domain" description="Extracellular" evidence="1">
    <location>
        <begin position="92"/>
        <end position="111"/>
    </location>
</feature>
<feature type="transmembrane region" description="Helical; Name=3" evidence="1">
    <location>
        <begin position="112"/>
        <end position="133"/>
    </location>
</feature>
<feature type="topological domain" description="Cytoplasmic" evidence="1">
    <location>
        <begin position="134"/>
        <end position="155"/>
    </location>
</feature>
<feature type="transmembrane region" description="Helical; Name=4" evidence="1">
    <location>
        <begin position="156"/>
        <end position="178"/>
    </location>
</feature>
<feature type="topological domain" description="Extracellular" evidence="1">
    <location>
        <begin position="179"/>
        <end position="203"/>
    </location>
</feature>
<feature type="transmembrane region" description="Helical; Name=5" evidence="1">
    <location>
        <begin position="204"/>
        <end position="225"/>
    </location>
</feature>
<feature type="topological domain" description="Cytoplasmic" evidence="1">
    <location>
        <begin position="226"/>
        <end position="292"/>
    </location>
</feature>
<feature type="transmembrane region" description="Helical; Name=6" evidence="1">
    <location>
        <begin position="293"/>
        <end position="314"/>
    </location>
</feature>
<feature type="topological domain" description="Extracellular" evidence="1">
    <location>
        <begin position="315"/>
        <end position="326"/>
    </location>
</feature>
<feature type="transmembrane region" description="Helical; Name=7" evidence="1">
    <location>
        <begin position="327"/>
        <end position="347"/>
    </location>
</feature>
<feature type="topological domain" description="Cytoplasmic" evidence="1">
    <location>
        <begin position="348"/>
        <end position="405"/>
    </location>
</feature>
<feature type="region of interest" description="Disordered" evidence="5">
    <location>
        <begin position="1"/>
        <end position="27"/>
    </location>
</feature>
<feature type="region of interest" description="Disordered" evidence="5">
    <location>
        <begin position="247"/>
        <end position="269"/>
    </location>
</feature>
<feature type="region of interest" description="Disordered" evidence="5">
    <location>
        <begin position="368"/>
        <end position="405"/>
    </location>
</feature>
<feature type="compositionally biased region" description="Low complexity" evidence="5">
    <location>
        <begin position="371"/>
        <end position="392"/>
    </location>
</feature>
<feature type="lipid moiety-binding region" description="S-palmitoyl cysteine" evidence="1">
    <location>
        <position position="361"/>
    </location>
</feature>
<feature type="glycosylation site" description="N-linked (GlcNAc...) asparagine" evidence="3">
    <location>
        <position position="8"/>
    </location>
</feature>
<feature type="glycosylation site" description="N-linked (GlcNAc...) asparagine" evidence="3">
    <location>
        <position position="26"/>
    </location>
</feature>
<feature type="disulfide bond" evidence="4">
    <location>
        <begin position="110"/>
        <end position="196"/>
    </location>
</feature>
<feature type="disulfide bond" evidence="4">
    <location>
        <begin position="189"/>
        <end position="195"/>
    </location>
</feature>
<feature type="sequence conflict" description="In Ref. 2; AAF08307." evidence="6" ref="2">
    <original>Q</original>
    <variation>P</variation>
    <location>
        <position position="395"/>
    </location>
</feature>
<feature type="sequence conflict" description="In Ref. 2; AAF08307." evidence="6" ref="2">
    <original>A</original>
    <variation>V</variation>
    <location>
        <position position="400"/>
    </location>
</feature>
<feature type="helix" evidence="7">
    <location>
        <begin position="40"/>
        <end position="63"/>
    </location>
</feature>
<feature type="strand" evidence="7">
    <location>
        <begin position="66"/>
        <end position="68"/>
    </location>
</feature>
<feature type="helix" evidence="7">
    <location>
        <begin position="73"/>
        <end position="89"/>
    </location>
</feature>
<feature type="helix" evidence="7">
    <location>
        <begin position="91"/>
        <end position="99"/>
    </location>
</feature>
<feature type="strand" evidence="7">
    <location>
        <begin position="100"/>
        <end position="102"/>
    </location>
</feature>
<feature type="helix" evidence="7">
    <location>
        <begin position="107"/>
        <end position="140"/>
    </location>
</feature>
<feature type="turn" evidence="8">
    <location>
        <begin position="142"/>
        <end position="144"/>
    </location>
</feature>
<feature type="turn" evidence="7">
    <location>
        <begin position="146"/>
        <end position="148"/>
    </location>
</feature>
<feature type="helix" evidence="7">
    <location>
        <begin position="151"/>
        <end position="169"/>
    </location>
</feature>
<feature type="turn" evidence="7">
    <location>
        <begin position="170"/>
        <end position="173"/>
    </location>
</feature>
<feature type="helix" evidence="7">
    <location>
        <begin position="189"/>
        <end position="191"/>
    </location>
</feature>
<feature type="helix" evidence="7">
    <location>
        <begin position="202"/>
        <end position="212"/>
    </location>
</feature>
<feature type="helix" evidence="7">
    <location>
        <begin position="214"/>
        <end position="240"/>
    </location>
</feature>
<feature type="helix" evidence="7">
    <location>
        <begin position="290"/>
        <end position="317"/>
    </location>
</feature>
<feature type="turn" evidence="7">
    <location>
        <begin position="320"/>
        <end position="322"/>
    </location>
</feature>
<feature type="helix" evidence="7">
    <location>
        <begin position="325"/>
        <end position="345"/>
    </location>
</feature>
<feature type="helix" evidence="7">
    <location>
        <begin position="350"/>
        <end position="357"/>
    </location>
</feature>
<name>ADRB3_CANLF</name>
<dbReference type="EMBL" id="U92468">
    <property type="protein sequence ID" value="AAB51068.1"/>
    <property type="molecule type" value="Genomic_DNA"/>
</dbReference>
<dbReference type="EMBL" id="AF200597">
    <property type="protein sequence ID" value="AAF08307.1"/>
    <property type="molecule type" value="mRNA"/>
</dbReference>
<dbReference type="RefSeq" id="NP_001003377.1">
    <property type="nucleotide sequence ID" value="NM_001003377.1"/>
</dbReference>
<dbReference type="PDB" id="7DH5">
    <property type="method" value="EM"/>
    <property type="resolution" value="3.16 A"/>
    <property type="chains" value="R=2-379"/>
</dbReference>
<dbReference type="PDB" id="7XJH">
    <property type="method" value="EM"/>
    <property type="resolution" value="3.30 A"/>
    <property type="chains" value="R=2-379"/>
</dbReference>
<dbReference type="PDB" id="7XJI">
    <property type="method" value="EM"/>
    <property type="resolution" value="3.90 A"/>
    <property type="chains" value="R=2-379"/>
</dbReference>
<dbReference type="PDBsum" id="7DH5"/>
<dbReference type="PDBsum" id="7XJH"/>
<dbReference type="PDBsum" id="7XJI"/>
<dbReference type="EMDB" id="EMD-30678"/>
<dbReference type="EMDB" id="EMD-33227"/>
<dbReference type="EMDB" id="EMD-33228"/>
<dbReference type="SMR" id="O02662"/>
<dbReference type="CORUM" id="O02662"/>
<dbReference type="FunCoup" id="O02662">
    <property type="interactions" value="57"/>
</dbReference>
<dbReference type="STRING" id="9615.ENSCAFP00000009245"/>
<dbReference type="BindingDB" id="O02662"/>
<dbReference type="ChEMBL" id="CHEMBL4400"/>
<dbReference type="DrugCentral" id="O02662"/>
<dbReference type="GlyCosmos" id="O02662">
    <property type="glycosylation" value="2 sites, No reported glycans"/>
</dbReference>
<dbReference type="PaxDb" id="9612-ENSCAFP00000009245"/>
<dbReference type="Ensembl" id="ENSCAFT00030028389.1">
    <property type="protein sequence ID" value="ENSCAFP00030024764.1"/>
    <property type="gene ID" value="ENSCAFG00030015392.1"/>
</dbReference>
<dbReference type="GeneID" id="442979"/>
<dbReference type="KEGG" id="cfa:442979"/>
<dbReference type="CTD" id="155"/>
<dbReference type="eggNOG" id="KOG3656">
    <property type="taxonomic scope" value="Eukaryota"/>
</dbReference>
<dbReference type="InParanoid" id="O02662"/>
<dbReference type="OrthoDB" id="28728at33554"/>
<dbReference type="PRO" id="PR:O02662"/>
<dbReference type="Proteomes" id="UP000002254">
    <property type="component" value="Unplaced"/>
</dbReference>
<dbReference type="Proteomes" id="UP000694429">
    <property type="component" value="Chromosome 16"/>
</dbReference>
<dbReference type="Proteomes" id="UP000694542">
    <property type="component" value="Unplaced"/>
</dbReference>
<dbReference type="Proteomes" id="UP000805418">
    <property type="component" value="Unplaced"/>
</dbReference>
<dbReference type="GO" id="GO:0030425">
    <property type="term" value="C:dendrite"/>
    <property type="evidence" value="ECO:0000318"/>
    <property type="project" value="GO_Central"/>
</dbReference>
<dbReference type="GO" id="GO:0005886">
    <property type="term" value="C:plasma membrane"/>
    <property type="evidence" value="ECO:0000318"/>
    <property type="project" value="GO_Central"/>
</dbReference>
<dbReference type="GO" id="GO:0043235">
    <property type="term" value="C:receptor complex"/>
    <property type="evidence" value="ECO:0000250"/>
    <property type="project" value="HGNC-UCL"/>
</dbReference>
<dbReference type="GO" id="GO:0045202">
    <property type="term" value="C:synapse"/>
    <property type="evidence" value="ECO:0007669"/>
    <property type="project" value="GOC"/>
</dbReference>
<dbReference type="GO" id="GO:0004939">
    <property type="term" value="F:beta-adrenergic receptor activity"/>
    <property type="evidence" value="ECO:0000250"/>
    <property type="project" value="HGNC-UCL"/>
</dbReference>
<dbReference type="GO" id="GO:0015052">
    <property type="term" value="F:beta3-adrenergic receptor activity"/>
    <property type="evidence" value="ECO:0000250"/>
    <property type="project" value="HGNC-UCL"/>
</dbReference>
<dbReference type="GO" id="GO:0004993">
    <property type="term" value="F:G protein-coupled serotonin receptor activity"/>
    <property type="evidence" value="ECO:0000318"/>
    <property type="project" value="GO_Central"/>
</dbReference>
<dbReference type="GO" id="GO:0030594">
    <property type="term" value="F:neurotransmitter receptor activity"/>
    <property type="evidence" value="ECO:0000318"/>
    <property type="project" value="GO_Central"/>
</dbReference>
<dbReference type="GO" id="GO:0042803">
    <property type="term" value="F:protein homodimerization activity"/>
    <property type="evidence" value="ECO:0000250"/>
    <property type="project" value="HGNC-UCL"/>
</dbReference>
<dbReference type="GO" id="GO:0071880">
    <property type="term" value="P:adenylate cyclase-activating adrenergic receptor signaling pathway"/>
    <property type="evidence" value="ECO:0000250"/>
    <property type="project" value="HGNC-UCL"/>
</dbReference>
<dbReference type="GO" id="GO:0007268">
    <property type="term" value="P:chemical synaptic transmission"/>
    <property type="evidence" value="ECO:0000318"/>
    <property type="project" value="GO_Central"/>
</dbReference>
<dbReference type="GO" id="GO:0007187">
    <property type="term" value="P:G protein-coupled receptor signaling pathway, coupled to cyclic nucleotide second messenger"/>
    <property type="evidence" value="ECO:0000318"/>
    <property type="project" value="GO_Central"/>
</dbReference>
<dbReference type="GO" id="GO:0043410">
    <property type="term" value="P:positive regulation of MAPK cascade"/>
    <property type="evidence" value="ECO:0000250"/>
    <property type="project" value="HGNC-UCL"/>
</dbReference>
<dbReference type="Gene3D" id="1.20.1070.10">
    <property type="entry name" value="Rhodopsin 7-helix transmembrane proteins"/>
    <property type="match status" value="1"/>
</dbReference>
<dbReference type="InterPro" id="IPR002233">
    <property type="entry name" value="ADR_fam"/>
</dbReference>
<dbReference type="InterPro" id="IPR000681">
    <property type="entry name" value="ADRB3_rcpt"/>
</dbReference>
<dbReference type="InterPro" id="IPR000276">
    <property type="entry name" value="GPCR_Rhodpsn"/>
</dbReference>
<dbReference type="InterPro" id="IPR017452">
    <property type="entry name" value="GPCR_Rhodpsn_7TM"/>
</dbReference>
<dbReference type="PANTHER" id="PTHR24248">
    <property type="entry name" value="ADRENERGIC RECEPTOR-RELATED G-PROTEIN COUPLED RECEPTOR"/>
    <property type="match status" value="1"/>
</dbReference>
<dbReference type="PANTHER" id="PTHR24248:SF3">
    <property type="entry name" value="BETA-3 ADRENERGIC RECEPTOR"/>
    <property type="match status" value="1"/>
</dbReference>
<dbReference type="Pfam" id="PF00001">
    <property type="entry name" value="7tm_1"/>
    <property type="match status" value="1"/>
</dbReference>
<dbReference type="PRINTS" id="PR01103">
    <property type="entry name" value="ADRENERGICR"/>
</dbReference>
<dbReference type="PRINTS" id="PR00563">
    <property type="entry name" value="ADRENRGCB3AR"/>
</dbReference>
<dbReference type="PRINTS" id="PR00237">
    <property type="entry name" value="GPCRRHODOPSN"/>
</dbReference>
<dbReference type="SMART" id="SM01381">
    <property type="entry name" value="7TM_GPCR_Srsx"/>
    <property type="match status" value="1"/>
</dbReference>
<dbReference type="SUPFAM" id="SSF81321">
    <property type="entry name" value="Family A G protein-coupled receptor-like"/>
    <property type="match status" value="1"/>
</dbReference>
<dbReference type="PROSITE" id="PS00237">
    <property type="entry name" value="G_PROTEIN_RECEP_F1_1"/>
    <property type="match status" value="1"/>
</dbReference>
<dbReference type="PROSITE" id="PS50262">
    <property type="entry name" value="G_PROTEIN_RECEP_F1_2"/>
    <property type="match status" value="1"/>
</dbReference>
<keyword id="KW-0002">3D-structure</keyword>
<keyword id="KW-1003">Cell membrane</keyword>
<keyword id="KW-1015">Disulfide bond</keyword>
<keyword id="KW-0297">G-protein coupled receptor</keyword>
<keyword id="KW-0325">Glycoprotein</keyword>
<keyword id="KW-0449">Lipoprotein</keyword>
<keyword id="KW-0472">Membrane</keyword>
<keyword id="KW-0564">Palmitate</keyword>
<keyword id="KW-0675">Receptor</keyword>
<keyword id="KW-1185">Reference proteome</keyword>
<keyword id="KW-0807">Transducer</keyword>
<keyword id="KW-0812">Transmembrane</keyword>
<keyword id="KW-1133">Transmembrane helix</keyword>
<proteinExistence type="evidence at protein level"/>
<comment type="function">
    <text>Beta-adrenergic receptors mediate the catecholamine-induced activation of adenylate cyclase through the action of G proteins. Beta-3 is involved in the regulation of lipolysis and thermogenesis.</text>
</comment>
<comment type="subunit">
    <text evidence="2">Interacts with ARRDC3.</text>
</comment>
<comment type="subcellular location">
    <subcellularLocation>
        <location>Cell membrane</location>
        <topology>Multi-pass membrane protein</topology>
    </subcellularLocation>
</comment>
<comment type="similarity">
    <text evidence="4">Belongs to the G-protein coupled receptor 1 family. Adrenergic receptor subfamily. ADRB3 sub-subfamily.</text>
</comment>
<reference key="1">
    <citation type="journal article" date="1998" name="Eur. J. Pharmacol.">
        <title>Genomic cloning and species-specific properties of the recombinant canine beta3-adrenoceptor.</title>
        <authorList>
            <person name="Lenzen G."/>
            <person name="Pietri-Rouxel F."/>
            <person name="Drumare M.F."/>
            <person name="Amiard A."/>
            <person name="Guillot S."/>
            <person name="Archimbault P."/>
            <person name="Strosberg A.D."/>
        </authorList>
    </citation>
    <scope>NUCLEOTIDE SEQUENCE [GENOMIC DNA]</scope>
</reference>
<reference key="2">
    <citation type="submission" date="1999-10" db="EMBL/GenBank/DDBJ databases">
        <authorList>
            <person name="Thompson G.M."/>
            <person name="Kelly L.J."/>
            <person name="Candelore M.R."/>
        </authorList>
    </citation>
    <scope>NUCLEOTIDE SEQUENCE [MRNA]</scope>
</reference>
<accession>O02662</accession>
<accession>Q9TTT2</accession>
<sequence>MAPWPHGNGSVASWPAAPTPTPDAANTSGLPGAPWAVALAGALLALEVLATVGGNLLVIVAIARTPRLQTMTNVFVTSLATADLVVGLLVVPPGATLALTGRWPLGATGCELWTSVDVLCVTASIETLCALAVDRYLAVTNPLRYGALVTKRRARAAVVLVWVVSAAVSFAPIMSKWWRVGADAEAQRCHSNPHCCAFASNIPYALLSSSVSFYLPLLVMLFVYARVFLVATRQLRLLRRELGRFPPAESPPAASRSRSPGPARRCASPAAVPSDRLRPARLLPLREHRALRTLGLIVGTFTLCWLPFFVANVMRALGGPSLVPSPALLALNWLGYANSAFNPLIYCRSPDFRSAFRRLLCRCRREEHRAAASPPGDPSAAPAALTSPAESSRCQALDGASWGIS</sequence>